<feature type="chain" id="PRO_0000081404" description="Transcription factor SKN7">
    <location>
        <begin position="1"/>
        <end position="622"/>
    </location>
</feature>
<feature type="domain" description="Response regulatory" evidence="3">
    <location>
        <begin position="378"/>
        <end position="492"/>
    </location>
</feature>
<feature type="region of interest" description="Disordered" evidence="4">
    <location>
        <begin position="1"/>
        <end position="29"/>
    </location>
</feature>
<feature type="region of interest" description="DNA-binding domain" evidence="1">
    <location>
        <begin position="84"/>
        <end position="190"/>
    </location>
</feature>
<feature type="region of interest" description="Hydrophobic repeat HR-A/B" evidence="1">
    <location>
        <begin position="212"/>
        <end position="303"/>
    </location>
</feature>
<feature type="region of interest" description="Disordered" evidence="4">
    <location>
        <begin position="501"/>
        <end position="579"/>
    </location>
</feature>
<feature type="region of interest" description="Disordered" evidence="4">
    <location>
        <begin position="599"/>
        <end position="622"/>
    </location>
</feature>
<feature type="coiled-coil region" evidence="2">
    <location>
        <begin position="240"/>
        <end position="260"/>
    </location>
</feature>
<feature type="compositionally biased region" description="Polar residues" evidence="4">
    <location>
        <begin position="1"/>
        <end position="12"/>
    </location>
</feature>
<feature type="compositionally biased region" description="Low complexity" evidence="4">
    <location>
        <begin position="13"/>
        <end position="27"/>
    </location>
</feature>
<feature type="compositionally biased region" description="Low complexity" evidence="4">
    <location>
        <begin position="512"/>
        <end position="527"/>
    </location>
</feature>
<feature type="compositionally biased region" description="Polar residues" evidence="4">
    <location>
        <begin position="537"/>
        <end position="554"/>
    </location>
</feature>
<feature type="compositionally biased region" description="Low complexity" evidence="4">
    <location>
        <begin position="555"/>
        <end position="578"/>
    </location>
</feature>
<feature type="compositionally biased region" description="Polar residues" evidence="4">
    <location>
        <begin position="600"/>
        <end position="622"/>
    </location>
</feature>
<feature type="modified residue" description="4-aspartylphosphate" evidence="3 10">
    <location>
        <position position="427"/>
    </location>
</feature>
<feature type="mutagenesis site" description="No activity." evidence="8 9">
    <original>D</original>
    <variation>A</variation>
    <location>
        <position position="427"/>
    </location>
</feature>
<feature type="mutagenesis site" description="Augments activity." evidence="8 9">
    <original>D</original>
    <variation>E</variation>
    <location>
        <position position="427"/>
    </location>
</feature>
<feature type="mutagenesis site" description="Diminishes activity." evidence="8 9">
    <original>D</original>
    <variation>N</variation>
    <location>
        <position position="427"/>
    </location>
</feature>
<feature type="mutagenesis site" description="No activity." evidence="8 9">
    <original>D</original>
    <variation>R</variation>
    <location>
        <position position="427"/>
    </location>
</feature>
<feature type="sequence conflict" description="In Ref. 5; AAU09745." evidence="11" ref="5">
    <original>T</original>
    <variation>A</variation>
    <location>
        <position position="45"/>
    </location>
</feature>
<dbReference type="EMBL" id="U00485">
    <property type="protein sequence ID" value="AAC48911.1"/>
    <property type="molecule type" value="Unassigned_DNA"/>
</dbReference>
<dbReference type="EMBL" id="X83031">
    <property type="protein sequence ID" value="CAA58143.1"/>
    <property type="molecule type" value="Genomic_DNA"/>
</dbReference>
<dbReference type="EMBL" id="U00029">
    <property type="protein sequence ID" value="AAB69734.1"/>
    <property type="molecule type" value="Genomic_DNA"/>
</dbReference>
<dbReference type="EMBL" id="AY723828">
    <property type="protein sequence ID" value="AAU09745.1"/>
    <property type="molecule type" value="Genomic_DNA"/>
</dbReference>
<dbReference type="EMBL" id="BK006934">
    <property type="protein sequence ID" value="DAA06899.1"/>
    <property type="molecule type" value="Genomic_DNA"/>
</dbReference>
<dbReference type="PIR" id="A49344">
    <property type="entry name" value="A49344"/>
</dbReference>
<dbReference type="RefSeq" id="NP_012076.3">
    <property type="nucleotide sequence ID" value="NM_001179337.3"/>
</dbReference>
<dbReference type="SMR" id="P38889"/>
<dbReference type="BioGRID" id="36640">
    <property type="interactions" value="284"/>
</dbReference>
<dbReference type="DIP" id="DIP-2403N"/>
<dbReference type="FunCoup" id="P38889">
    <property type="interactions" value="1252"/>
</dbReference>
<dbReference type="IntAct" id="P38889">
    <property type="interactions" value="10"/>
</dbReference>
<dbReference type="STRING" id="4932.YHR206W"/>
<dbReference type="ChEMBL" id="CHEMBL2146314"/>
<dbReference type="GlyGen" id="P38889">
    <property type="glycosylation" value="1 site"/>
</dbReference>
<dbReference type="iPTMnet" id="P38889"/>
<dbReference type="PaxDb" id="4932-YHR206W"/>
<dbReference type="PeptideAtlas" id="P38889"/>
<dbReference type="EnsemblFungi" id="YHR206W_mRNA">
    <property type="protein sequence ID" value="YHR206W"/>
    <property type="gene ID" value="YHR206W"/>
</dbReference>
<dbReference type="GeneID" id="856613"/>
<dbReference type="KEGG" id="sce:YHR206W"/>
<dbReference type="AGR" id="SGD:S000001249"/>
<dbReference type="SGD" id="S000001249">
    <property type="gene designation" value="SKN7"/>
</dbReference>
<dbReference type="VEuPathDB" id="FungiDB:YHR206W"/>
<dbReference type="eggNOG" id="KOG0519">
    <property type="taxonomic scope" value="Eukaryota"/>
</dbReference>
<dbReference type="eggNOG" id="KOG0627">
    <property type="taxonomic scope" value="Eukaryota"/>
</dbReference>
<dbReference type="HOGENOM" id="CLU_008776_3_0_1"/>
<dbReference type="InParanoid" id="P38889"/>
<dbReference type="OMA" id="TNVDPGW"/>
<dbReference type="OrthoDB" id="424572at2759"/>
<dbReference type="BioCyc" id="YEAST:G3O-31232-MONOMER"/>
<dbReference type="BioGRID-ORCS" id="856613">
    <property type="hits" value="6 hits in 13 CRISPR screens"/>
</dbReference>
<dbReference type="PRO" id="PR:P38889"/>
<dbReference type="Proteomes" id="UP000002311">
    <property type="component" value="Chromosome VIII"/>
</dbReference>
<dbReference type="RNAct" id="P38889">
    <property type="molecule type" value="protein"/>
</dbReference>
<dbReference type="GO" id="GO:0005829">
    <property type="term" value="C:cytosol"/>
    <property type="evidence" value="ECO:0000314"/>
    <property type="project" value="SGD"/>
</dbReference>
<dbReference type="GO" id="GO:0005634">
    <property type="term" value="C:nucleus"/>
    <property type="evidence" value="ECO:0000314"/>
    <property type="project" value="SGD"/>
</dbReference>
<dbReference type="GO" id="GO:0003700">
    <property type="term" value="F:DNA-binding transcription factor activity"/>
    <property type="evidence" value="ECO:0000314"/>
    <property type="project" value="SGD"/>
</dbReference>
<dbReference type="GO" id="GO:0000156">
    <property type="term" value="F:phosphorelay response regulator activity"/>
    <property type="evidence" value="ECO:0000314"/>
    <property type="project" value="SGD"/>
</dbReference>
<dbReference type="GO" id="GO:0043565">
    <property type="term" value="F:sequence-specific DNA binding"/>
    <property type="evidence" value="ECO:0007005"/>
    <property type="project" value="SGD"/>
</dbReference>
<dbReference type="GO" id="GO:0034599">
    <property type="term" value="P:cellular response to oxidative stress"/>
    <property type="evidence" value="ECO:0000315"/>
    <property type="project" value="SGD"/>
</dbReference>
<dbReference type="GO" id="GO:0008361">
    <property type="term" value="P:regulation of cell size"/>
    <property type="evidence" value="ECO:0000315"/>
    <property type="project" value="SGD"/>
</dbReference>
<dbReference type="GO" id="GO:1900101">
    <property type="term" value="P:regulation of endoplasmic reticulum unfolded protein response"/>
    <property type="evidence" value="ECO:0000315"/>
    <property type="project" value="SGD"/>
</dbReference>
<dbReference type="GO" id="GO:0006357">
    <property type="term" value="P:regulation of transcription by RNA polymerase II"/>
    <property type="evidence" value="ECO:0000315"/>
    <property type="project" value="SGD"/>
</dbReference>
<dbReference type="GO" id="GO:0000304">
    <property type="term" value="P:response to singlet oxygen"/>
    <property type="evidence" value="ECO:0000315"/>
    <property type="project" value="SGD"/>
</dbReference>
<dbReference type="GO" id="GO:0006368">
    <property type="term" value="P:transcription elongation by RNA polymerase II"/>
    <property type="evidence" value="ECO:0000314"/>
    <property type="project" value="SGD"/>
</dbReference>
<dbReference type="CDD" id="cd17546">
    <property type="entry name" value="REC_hyHK_CKI1_RcsC-like"/>
    <property type="match status" value="1"/>
</dbReference>
<dbReference type="FunFam" id="1.10.10.10:FF:000380">
    <property type="entry name" value="Transcription factor SKN7"/>
    <property type="match status" value="1"/>
</dbReference>
<dbReference type="FunFam" id="3.40.50.2300:FF:000355">
    <property type="entry name" value="Transcription factor SKN7"/>
    <property type="match status" value="1"/>
</dbReference>
<dbReference type="Gene3D" id="3.40.50.2300">
    <property type="match status" value="1"/>
</dbReference>
<dbReference type="Gene3D" id="1.10.10.10">
    <property type="entry name" value="Winged helix-like DNA-binding domain superfamily/Winged helix DNA-binding domain"/>
    <property type="match status" value="1"/>
</dbReference>
<dbReference type="InterPro" id="IPR011006">
    <property type="entry name" value="CheY-like_superfamily"/>
</dbReference>
<dbReference type="InterPro" id="IPR000232">
    <property type="entry name" value="HSF_DNA-bd"/>
</dbReference>
<dbReference type="InterPro" id="IPR001789">
    <property type="entry name" value="Sig_transdc_resp-reg_receiver"/>
</dbReference>
<dbReference type="InterPro" id="IPR014402">
    <property type="entry name" value="Sig_transdc_resp-reg_Skn7"/>
</dbReference>
<dbReference type="InterPro" id="IPR036388">
    <property type="entry name" value="WH-like_DNA-bd_sf"/>
</dbReference>
<dbReference type="InterPro" id="IPR036390">
    <property type="entry name" value="WH_DNA-bd_sf"/>
</dbReference>
<dbReference type="PANTHER" id="PTHR45339">
    <property type="entry name" value="HYBRID SIGNAL TRANSDUCTION HISTIDINE KINASE J"/>
    <property type="match status" value="1"/>
</dbReference>
<dbReference type="PANTHER" id="PTHR45339:SF1">
    <property type="entry name" value="HYBRID SIGNAL TRANSDUCTION HISTIDINE KINASE J"/>
    <property type="match status" value="1"/>
</dbReference>
<dbReference type="Pfam" id="PF00447">
    <property type="entry name" value="HSF_DNA-bind"/>
    <property type="match status" value="1"/>
</dbReference>
<dbReference type="Pfam" id="PF00072">
    <property type="entry name" value="Response_reg"/>
    <property type="match status" value="1"/>
</dbReference>
<dbReference type="PIRSF" id="PIRSF002595">
    <property type="entry name" value="RR_SKN7"/>
    <property type="match status" value="1"/>
</dbReference>
<dbReference type="PRINTS" id="PR00056">
    <property type="entry name" value="HSFDOMAIN"/>
</dbReference>
<dbReference type="SMART" id="SM00415">
    <property type="entry name" value="HSF"/>
    <property type="match status" value="1"/>
</dbReference>
<dbReference type="SMART" id="SM00448">
    <property type="entry name" value="REC"/>
    <property type="match status" value="1"/>
</dbReference>
<dbReference type="SUPFAM" id="SSF52172">
    <property type="entry name" value="CheY-like"/>
    <property type="match status" value="1"/>
</dbReference>
<dbReference type="SUPFAM" id="SSF46785">
    <property type="entry name" value="Winged helix' DNA-binding domain"/>
    <property type="match status" value="1"/>
</dbReference>
<dbReference type="PROSITE" id="PS00434">
    <property type="entry name" value="HSF_DOMAIN"/>
    <property type="match status" value="1"/>
</dbReference>
<dbReference type="PROSITE" id="PS50110">
    <property type="entry name" value="RESPONSE_REGULATORY"/>
    <property type="match status" value="1"/>
</dbReference>
<keyword id="KW-0175">Coiled coil</keyword>
<keyword id="KW-0238">DNA-binding</keyword>
<keyword id="KW-0539">Nucleus</keyword>
<keyword id="KW-0597">Phosphoprotein</keyword>
<keyword id="KW-1185">Reference proteome</keyword>
<keyword id="KW-0804">Transcription</keyword>
<keyword id="KW-0805">Transcription regulation</keyword>
<keyword id="KW-0902">Two-component regulatory system</keyword>
<evidence type="ECO:0000250" key="1">
    <source>
        <dbReference type="UniProtKB" id="G0SB31"/>
    </source>
</evidence>
<evidence type="ECO:0000255" key="2"/>
<evidence type="ECO:0000255" key="3">
    <source>
        <dbReference type="PROSITE-ProRule" id="PRU00169"/>
    </source>
</evidence>
<evidence type="ECO:0000256" key="4">
    <source>
        <dbReference type="SAM" id="MobiDB-lite"/>
    </source>
</evidence>
<evidence type="ECO:0000269" key="5">
    <source>
    </source>
</evidence>
<evidence type="ECO:0000269" key="6">
    <source>
    </source>
</evidence>
<evidence type="ECO:0000269" key="7">
    <source>
    </source>
</evidence>
<evidence type="ECO:0000269" key="8">
    <source>
    </source>
</evidence>
<evidence type="ECO:0000269" key="9">
    <source>
    </source>
</evidence>
<evidence type="ECO:0000269" key="10">
    <source>
    </source>
</evidence>
<evidence type="ECO:0000305" key="11"/>
<gene>
    <name type="primary">SKN7</name>
    <name type="synonym">BRY1</name>
    <name type="synonym">POS9</name>
    <name type="ordered locus">YHR206W</name>
</gene>
<reference key="1">
    <citation type="journal article" date="1993" name="J. Bacteriol.">
        <title>SKN7, a yeast multicopy suppressor of a mutation affecting cell wall beta-glucan assembly, encodes a product with domains homologous to prokaryotic two-component regulators and to heat shock transcription factors.</title>
        <authorList>
            <person name="Brown J.L."/>
            <person name="North S."/>
            <person name="Bussey H."/>
        </authorList>
    </citation>
    <scope>NUCLEOTIDE SEQUENCE</scope>
</reference>
<reference key="2">
    <citation type="journal article" date="1996" name="Curr. Genet.">
        <title>The response regulator-like protein Pos9/Skn7 of Saccharomyces cerevisiae is involved in oxidative stress resistance.</title>
        <authorList>
            <person name="Krems B."/>
            <person name="Charizanis C."/>
            <person name="Entian K.-D."/>
        </authorList>
    </citation>
    <scope>NUCLEOTIDE SEQUENCE [GENOMIC DNA]</scope>
    <scope>FUNCTION</scope>
    <scope>MUTAGENESIS OF ASP-427</scope>
</reference>
<reference key="3">
    <citation type="journal article" date="1994" name="Science">
        <title>Complete nucleotide sequence of Saccharomyces cerevisiae chromosome VIII.</title>
        <authorList>
            <person name="Johnston M."/>
            <person name="Andrews S."/>
            <person name="Brinkman R."/>
            <person name="Cooper J."/>
            <person name="Ding H."/>
            <person name="Dover J."/>
            <person name="Du Z."/>
            <person name="Favello A."/>
            <person name="Fulton L."/>
            <person name="Gattung S."/>
            <person name="Geisel C."/>
            <person name="Kirsten J."/>
            <person name="Kucaba T."/>
            <person name="Hillier L.W."/>
            <person name="Jier M."/>
            <person name="Johnston L."/>
            <person name="Langston Y."/>
            <person name="Latreille P."/>
            <person name="Louis E.J."/>
            <person name="Macri C."/>
            <person name="Mardis E."/>
            <person name="Menezes S."/>
            <person name="Mouser L."/>
            <person name="Nhan M."/>
            <person name="Rifkin L."/>
            <person name="Riles L."/>
            <person name="St Peter H."/>
            <person name="Trevaskis E."/>
            <person name="Vaughan K."/>
            <person name="Vignati D."/>
            <person name="Wilcox L."/>
            <person name="Wohldman P."/>
            <person name="Waterston R."/>
            <person name="Wilson R."/>
            <person name="Vaudin M."/>
        </authorList>
    </citation>
    <scope>NUCLEOTIDE SEQUENCE [LARGE SCALE GENOMIC DNA]</scope>
    <source>
        <strain>ATCC 204508 / S288c</strain>
    </source>
</reference>
<reference key="4">
    <citation type="journal article" date="2014" name="G3 (Bethesda)">
        <title>The reference genome sequence of Saccharomyces cerevisiae: Then and now.</title>
        <authorList>
            <person name="Engel S.R."/>
            <person name="Dietrich F.S."/>
            <person name="Fisk D.G."/>
            <person name="Binkley G."/>
            <person name="Balakrishnan R."/>
            <person name="Costanzo M.C."/>
            <person name="Dwight S.S."/>
            <person name="Hitz B.C."/>
            <person name="Karra K."/>
            <person name="Nash R.S."/>
            <person name="Weng S."/>
            <person name="Wong E.D."/>
            <person name="Lloyd P."/>
            <person name="Skrzypek M.S."/>
            <person name="Miyasato S.R."/>
            <person name="Simison M."/>
            <person name="Cherry J.M."/>
        </authorList>
    </citation>
    <scope>GENOME REANNOTATION</scope>
    <source>
        <strain>ATCC 204508 / S288c</strain>
    </source>
</reference>
<reference key="5">
    <citation type="journal article" date="2007" name="Genome Res.">
        <title>Approaching a complete repository of sequence-verified protein-encoding clones for Saccharomyces cerevisiae.</title>
        <authorList>
            <person name="Hu Y."/>
            <person name="Rolfs A."/>
            <person name="Bhullar B."/>
            <person name="Murthy T.V.S."/>
            <person name="Zhu C."/>
            <person name="Berger M.F."/>
            <person name="Camargo A.A."/>
            <person name="Kelley F."/>
            <person name="McCarron S."/>
            <person name="Jepson D."/>
            <person name="Richardson A."/>
            <person name="Raphael J."/>
            <person name="Moreira D."/>
            <person name="Taycher E."/>
            <person name="Zuo D."/>
            <person name="Mohr S."/>
            <person name="Kane M.F."/>
            <person name="Williamson J."/>
            <person name="Simpson A.J.G."/>
            <person name="Bulyk M.L."/>
            <person name="Harlow E."/>
            <person name="Marsischky G."/>
            <person name="Kolodner R.D."/>
            <person name="LaBaer J."/>
        </authorList>
    </citation>
    <scope>NUCLEOTIDE SEQUENCE [GENOMIC DNA]</scope>
    <source>
        <strain>ATCC 204508 / S288c</strain>
    </source>
</reference>
<reference key="6">
    <citation type="journal article" date="1994" name="EMBO J.">
        <title>Yeast Skn7p functions in a eukaryotic two-component regulatory pathway.</title>
        <authorList>
            <person name="Brown J.L."/>
            <person name="Bussey H."/>
            <person name="Stewart R.C."/>
        </authorList>
    </citation>
    <scope>FUNCTION</scope>
    <scope>MUTAGENESIS OF ASP-427</scope>
</reference>
<reference key="7">
    <citation type="journal article" date="1998" name="EMBO J.">
        <title>The yeast histidine protein kinase, Sln1p, mediates phosphotransfer to two response regulators, Ssk1p and Skn7p.</title>
        <authorList>
            <person name="Li S."/>
            <person name="Ault A."/>
            <person name="Malone C.L."/>
            <person name="Raitt D."/>
            <person name="Dean S."/>
            <person name="Johnston L.H."/>
            <person name="Deschenes R.J."/>
            <person name="Fassler J.S."/>
        </authorList>
    </citation>
    <scope>FUNCTION</scope>
    <scope>PHOSPHORYLATION AT ASP-427</scope>
</reference>
<reference key="8">
    <citation type="journal article" date="2000" name="Mol. Biol. Cell">
        <title>The Skn7 response regulator of Saccharomyces cerevisiae interacts with Hsf1 in vivo and is required for the induction of heat shock genes by oxidative stress.</title>
        <authorList>
            <person name="Raitt D.C."/>
            <person name="Johnson A.L."/>
            <person name="Erkine A.M."/>
            <person name="Makino K."/>
            <person name="Morgan B."/>
            <person name="Gross D.S."/>
            <person name="Johnston L.H."/>
        </authorList>
    </citation>
    <scope>FUNCTION</scope>
    <scope>SUBCELLULAR LOCATION</scope>
</reference>
<reference key="9">
    <citation type="journal article" date="2003" name="Eukaryot. Cell">
        <title>Saccharomyces cerevisiae histidine phosphotransferase Ypd1p shuttles between the nucleus and cytoplasm for SLN1-dependent phosphorylation of Ssk1p and Skn7p.</title>
        <authorList>
            <person name="Lu J.M.-Y."/>
            <person name="Deschenes R.J."/>
            <person name="Fassler J.S."/>
        </authorList>
    </citation>
    <scope>SUBCELLULAR LOCATION</scope>
</reference>
<reference key="10">
    <citation type="journal article" date="2003" name="Nature">
        <title>Global analysis of protein expression in yeast.</title>
        <authorList>
            <person name="Ghaemmaghami S."/>
            <person name="Huh W.-K."/>
            <person name="Bower K."/>
            <person name="Howson R.W."/>
            <person name="Belle A."/>
            <person name="Dephoure N."/>
            <person name="O'Shea E.K."/>
            <person name="Weissman J.S."/>
        </authorList>
    </citation>
    <scope>LEVEL OF PROTEIN EXPRESSION [LARGE SCALE ANALYSIS]</scope>
</reference>
<reference key="11">
    <citation type="journal article" date="2008" name="Mol. Cell. Proteomics">
        <title>A multidimensional chromatography technology for in-depth phosphoproteome analysis.</title>
        <authorList>
            <person name="Albuquerque C.P."/>
            <person name="Smolka M.B."/>
            <person name="Payne S.H."/>
            <person name="Bafna V."/>
            <person name="Eng J."/>
            <person name="Zhou H."/>
        </authorList>
    </citation>
    <scope>IDENTIFICATION BY MASS SPECTROMETRY [LARGE SCALE ANALYSIS]</scope>
</reference>
<comment type="function">
    <text evidence="5 8 9 10">Transcription factor that is part of a SLN1-YPD1-SKN7 two-component regulatory system, which controls gene expression in response to changes in the osmolarity of the extracellular environment. Under low osmotic conditions, phosphorylated and activated by the phosphorelay intermediate protein YPD1. Also activated in response to oxidative stress, independent on the two-component regulatory system. Regulates heat shock genes in response to oxidative stress and genes involved in cell wall integrity in response to osmotic changes.</text>
</comment>
<comment type="subunit">
    <text evidence="1">Homotrimer.</text>
</comment>
<comment type="subcellular location">
    <subcellularLocation>
        <location evidence="5 7">Nucleus</location>
    </subcellularLocation>
</comment>
<comment type="domain">
    <text evidence="1">Homotrimerization occurs through formation of a three-stranded coiled-coil structure generated by intermolecular interactions between HR-A/B regions allowing DNA-binding activity.</text>
</comment>
<comment type="PTM">
    <text>The phosphorelay mechanism involves the sequential transfer of a phosphate group from 'His-576' (H1) to 'Asp-1144' (D1) of SLN1, then to 'His-64' (H2) of YPD1 and finally to Asp-427 (D2) of SKN7.</text>
</comment>
<comment type="miscellaneous">
    <text evidence="6">Present with 2570 molecules/cell in log phase SD medium.</text>
</comment>
<comment type="similarity">
    <text evidence="11">Belongs to the SKN7 family.</text>
</comment>
<sequence>MSFSTINSNVNKTTGDSNNNTTENSSTADLLGMDLLQSGPRLMNTMQPNNSSDMLHINNKTNNVQQPAGNTNISSANAGAKAPANEFVRKLFRILENNEYPDIVTWTENGKSFVVLDTGKFTTHILPNHFKHSNFASFVRQLNKYDFHKVKRSPEERQRCKYGEQSWEFQHPEFRVHYGKGLDNIKRKIPAQRKVLLDESQKALLHFNSEGTNPNNPSGSLLNESTTELLLSNTVSKDAFGNLRRRVDKLQKELDMSKMESYATKVELQKLNSKYNTVIESLITFKTINENLLNNFNTLCSTLANNGIEVPIFGDNGNRNPTGNTNPATTTAIQSNNNTNNASPATSTVSLQLPNLPDQNSLTPNAQNNTVTLRKGFHVLLVEDDAVSIQLCSKFLRKYGCTVQVVSDGLSAISTLEKYRYDLVLMDIVMPNLDGATATSIVRSFDNETPIIAMTGNIMNQDLITYLQHGMNDILAKPFTRDDLHSILIRYLKDRIPLCEQQLPPRNSSPQTHSNTNTANSNPNTINEQSLAMLPQDNPSTTTPVTPGASISSAQHVQQGQQEQQHQIFHAQQQQQHHNAIANARSDVAIPNLEHEINTVPHSSMGSTPQLPQSTLQENQLS</sequence>
<protein>
    <recommendedName>
        <fullName>Transcription factor SKN7</fullName>
    </recommendedName>
    <alternativeName>
        <fullName>Peroxide sensitivity protein 9</fullName>
    </alternativeName>
</protein>
<accession>P38889</accession>
<accession>D3DLF5</accession>
<accession>E9P959</accession>
<accession>P39747</accession>
<organism>
    <name type="scientific">Saccharomyces cerevisiae (strain ATCC 204508 / S288c)</name>
    <name type="common">Baker's yeast</name>
    <dbReference type="NCBI Taxonomy" id="559292"/>
    <lineage>
        <taxon>Eukaryota</taxon>
        <taxon>Fungi</taxon>
        <taxon>Dikarya</taxon>
        <taxon>Ascomycota</taxon>
        <taxon>Saccharomycotina</taxon>
        <taxon>Saccharomycetes</taxon>
        <taxon>Saccharomycetales</taxon>
        <taxon>Saccharomycetaceae</taxon>
        <taxon>Saccharomyces</taxon>
    </lineage>
</organism>
<proteinExistence type="evidence at protein level"/>
<name>SKN7_YEAST</name>